<evidence type="ECO:0000250" key="1"/>
<evidence type="ECO:0000305" key="2"/>
<sequence length="502" mass="56936">MSEQEVKELDLNGEMLVRREKLAALRAKGNAFPNKFRRDALAQDLHNQYDAEDGEILKEKGIEVQVAGRIMTRRAMGKATFITIQDMSGKIQLYVARDNLPEGVYKDDVGTWDLGDIVGIKGTLFKTKTDELTVKTTEVQLLTKALRPLPDKFHGLTDQEVRYRQRYLDLISNEESRRTFIIRSKVVAGIREYFISKGFMEVETPMLQVIPGGASARPFVTHHNALDVDMYLRIAPELYLKRLVVGGFERVFELNRNFRNEGVSVRHNPEFTMLEYYQAYADYHDLMDNTEELLRKLAIDILGTTIVKYGDLEFDFGKPFERITLHDATIKYGADKGIVKEDLYDFDRAKATAERLGIEVQKSWGLGSIVNAIFEEVAEHHLIQPTFLNGSPAEISPLARRNDENPEVTDRFELFIGGREIGNGFSELNDAEDQNERFDAQVAAKEAGDDEAMFKDEDFVVALEHGLPPTAGEGLGIDRLAMLYANAPSIRDVILFPAMRQK</sequence>
<accession>P43825</accession>
<comment type="catalytic activity">
    <reaction>
        <text>tRNA(Lys) + L-lysine + ATP = L-lysyl-tRNA(Lys) + AMP + diphosphate</text>
        <dbReference type="Rhea" id="RHEA:20792"/>
        <dbReference type="Rhea" id="RHEA-COMP:9696"/>
        <dbReference type="Rhea" id="RHEA-COMP:9697"/>
        <dbReference type="ChEBI" id="CHEBI:30616"/>
        <dbReference type="ChEBI" id="CHEBI:32551"/>
        <dbReference type="ChEBI" id="CHEBI:33019"/>
        <dbReference type="ChEBI" id="CHEBI:78442"/>
        <dbReference type="ChEBI" id="CHEBI:78529"/>
        <dbReference type="ChEBI" id="CHEBI:456215"/>
        <dbReference type="EC" id="6.1.1.6"/>
    </reaction>
</comment>
<comment type="cofactor">
    <cofactor evidence="1">
        <name>Mg(2+)</name>
        <dbReference type="ChEBI" id="CHEBI:18420"/>
    </cofactor>
    <text evidence="1">Binds 3 Mg(2+) ions per subunit.</text>
</comment>
<comment type="subunit">
    <text evidence="1">Homodimer.</text>
</comment>
<comment type="subcellular location">
    <subcellularLocation>
        <location evidence="1">Cytoplasm</location>
    </subcellularLocation>
</comment>
<comment type="similarity">
    <text evidence="2">Belongs to the class-II aminoacyl-tRNA synthetase family.</text>
</comment>
<name>SYK_HAEIN</name>
<feature type="chain" id="PRO_0000152634" description="Lysine--tRNA ligase">
    <location>
        <begin position="1"/>
        <end position="502"/>
    </location>
</feature>
<feature type="binding site" evidence="1">
    <location>
        <position position="413"/>
    </location>
    <ligand>
        <name>Mg(2+)</name>
        <dbReference type="ChEBI" id="CHEBI:18420"/>
        <label>1</label>
    </ligand>
</feature>
<feature type="binding site" evidence="1">
    <location>
        <position position="420"/>
    </location>
    <ligand>
        <name>Mg(2+)</name>
        <dbReference type="ChEBI" id="CHEBI:18420"/>
        <label>1</label>
    </ligand>
</feature>
<feature type="binding site" evidence="1">
    <location>
        <position position="420"/>
    </location>
    <ligand>
        <name>Mg(2+)</name>
        <dbReference type="ChEBI" id="CHEBI:18420"/>
        <label>2</label>
    </ligand>
</feature>
<proteinExistence type="inferred from homology"/>
<gene>
    <name type="primary">lysS</name>
    <name type="synonym">lysU</name>
    <name type="ordered locus">HI_1211</name>
</gene>
<keyword id="KW-0030">Aminoacyl-tRNA synthetase</keyword>
<keyword id="KW-0067">ATP-binding</keyword>
<keyword id="KW-0963">Cytoplasm</keyword>
<keyword id="KW-0436">Ligase</keyword>
<keyword id="KW-0460">Magnesium</keyword>
<keyword id="KW-0479">Metal-binding</keyword>
<keyword id="KW-0547">Nucleotide-binding</keyword>
<keyword id="KW-0648">Protein biosynthesis</keyword>
<keyword id="KW-1185">Reference proteome</keyword>
<organism>
    <name type="scientific">Haemophilus influenzae (strain ATCC 51907 / DSM 11121 / KW20 / Rd)</name>
    <dbReference type="NCBI Taxonomy" id="71421"/>
    <lineage>
        <taxon>Bacteria</taxon>
        <taxon>Pseudomonadati</taxon>
        <taxon>Pseudomonadota</taxon>
        <taxon>Gammaproteobacteria</taxon>
        <taxon>Pasteurellales</taxon>
        <taxon>Pasteurellaceae</taxon>
        <taxon>Haemophilus</taxon>
    </lineage>
</organism>
<reference key="1">
    <citation type="journal article" date="1995" name="Science">
        <title>Whole-genome random sequencing and assembly of Haemophilus influenzae Rd.</title>
        <authorList>
            <person name="Fleischmann R.D."/>
            <person name="Adams M.D."/>
            <person name="White O."/>
            <person name="Clayton R.A."/>
            <person name="Kirkness E.F."/>
            <person name="Kerlavage A.R."/>
            <person name="Bult C.J."/>
            <person name="Tomb J.-F."/>
            <person name="Dougherty B.A."/>
            <person name="Merrick J.M."/>
            <person name="McKenney K."/>
            <person name="Sutton G.G."/>
            <person name="FitzHugh W."/>
            <person name="Fields C.A."/>
            <person name="Gocayne J.D."/>
            <person name="Scott J.D."/>
            <person name="Shirley R."/>
            <person name="Liu L.-I."/>
            <person name="Glodek A."/>
            <person name="Kelley J.M."/>
            <person name="Weidman J.F."/>
            <person name="Phillips C.A."/>
            <person name="Spriggs T."/>
            <person name="Hedblom E."/>
            <person name="Cotton M.D."/>
            <person name="Utterback T.R."/>
            <person name="Hanna M.C."/>
            <person name="Nguyen D.T."/>
            <person name="Saudek D.M."/>
            <person name="Brandon R.C."/>
            <person name="Fine L.D."/>
            <person name="Fritchman J.L."/>
            <person name="Fuhrmann J.L."/>
            <person name="Geoghagen N.S.M."/>
            <person name="Gnehm C.L."/>
            <person name="McDonald L.A."/>
            <person name="Small K.V."/>
            <person name="Fraser C.M."/>
            <person name="Smith H.O."/>
            <person name="Venter J.C."/>
        </authorList>
    </citation>
    <scope>NUCLEOTIDE SEQUENCE [LARGE SCALE GENOMIC DNA]</scope>
    <source>
        <strain>ATCC 51907 / DSM 11121 / KW20 / Rd</strain>
    </source>
</reference>
<protein>
    <recommendedName>
        <fullName>Lysine--tRNA ligase</fullName>
        <ecNumber>6.1.1.6</ecNumber>
    </recommendedName>
    <alternativeName>
        <fullName>Lysyl-tRNA synthetase</fullName>
        <shortName>LysRS</shortName>
    </alternativeName>
</protein>
<dbReference type="EC" id="6.1.1.6"/>
<dbReference type="EMBL" id="L42023">
    <property type="protein sequence ID" value="AAC22865.1"/>
    <property type="molecule type" value="Genomic_DNA"/>
</dbReference>
<dbReference type="PIR" id="D64110">
    <property type="entry name" value="D64110"/>
</dbReference>
<dbReference type="RefSeq" id="NP_439367.1">
    <property type="nucleotide sequence ID" value="NC_000907.1"/>
</dbReference>
<dbReference type="SMR" id="P43825"/>
<dbReference type="STRING" id="71421.HI_1211"/>
<dbReference type="EnsemblBacteria" id="AAC22865">
    <property type="protein sequence ID" value="AAC22865"/>
    <property type="gene ID" value="HI_1211"/>
</dbReference>
<dbReference type="KEGG" id="hin:HI_1211"/>
<dbReference type="PATRIC" id="fig|71421.8.peg.1263"/>
<dbReference type="eggNOG" id="COG1190">
    <property type="taxonomic scope" value="Bacteria"/>
</dbReference>
<dbReference type="HOGENOM" id="CLU_008255_6_0_6"/>
<dbReference type="OrthoDB" id="9802326at2"/>
<dbReference type="PhylomeDB" id="P43825"/>
<dbReference type="BioCyc" id="HINF71421:G1GJ1-1242-MONOMER"/>
<dbReference type="Proteomes" id="UP000000579">
    <property type="component" value="Chromosome"/>
</dbReference>
<dbReference type="GO" id="GO:0005737">
    <property type="term" value="C:cytoplasm"/>
    <property type="evidence" value="ECO:0000318"/>
    <property type="project" value="GO_Central"/>
</dbReference>
<dbReference type="GO" id="GO:0005829">
    <property type="term" value="C:cytosol"/>
    <property type="evidence" value="ECO:0000318"/>
    <property type="project" value="GO_Central"/>
</dbReference>
<dbReference type="GO" id="GO:0005524">
    <property type="term" value="F:ATP binding"/>
    <property type="evidence" value="ECO:0007669"/>
    <property type="project" value="UniProtKB-UniRule"/>
</dbReference>
<dbReference type="GO" id="GO:0004824">
    <property type="term" value="F:lysine-tRNA ligase activity"/>
    <property type="evidence" value="ECO:0000318"/>
    <property type="project" value="GO_Central"/>
</dbReference>
<dbReference type="GO" id="GO:0000287">
    <property type="term" value="F:magnesium ion binding"/>
    <property type="evidence" value="ECO:0007669"/>
    <property type="project" value="UniProtKB-UniRule"/>
</dbReference>
<dbReference type="GO" id="GO:0000049">
    <property type="term" value="F:tRNA binding"/>
    <property type="evidence" value="ECO:0000318"/>
    <property type="project" value="GO_Central"/>
</dbReference>
<dbReference type="GO" id="GO:0006430">
    <property type="term" value="P:lysyl-tRNA aminoacylation"/>
    <property type="evidence" value="ECO:0000318"/>
    <property type="project" value="GO_Central"/>
</dbReference>
<dbReference type="CDD" id="cd00775">
    <property type="entry name" value="LysRS_core"/>
    <property type="match status" value="1"/>
</dbReference>
<dbReference type="CDD" id="cd04322">
    <property type="entry name" value="LysRS_N"/>
    <property type="match status" value="1"/>
</dbReference>
<dbReference type="FunFam" id="2.40.50.140:FF:000024">
    <property type="entry name" value="Lysine--tRNA ligase"/>
    <property type="match status" value="1"/>
</dbReference>
<dbReference type="FunFam" id="3.30.930.10:FF:000001">
    <property type="entry name" value="Lysine--tRNA ligase"/>
    <property type="match status" value="1"/>
</dbReference>
<dbReference type="Gene3D" id="3.30.930.10">
    <property type="entry name" value="Bira Bifunctional Protein, Domain 2"/>
    <property type="match status" value="1"/>
</dbReference>
<dbReference type="Gene3D" id="2.40.50.140">
    <property type="entry name" value="Nucleic acid-binding proteins"/>
    <property type="match status" value="1"/>
</dbReference>
<dbReference type="HAMAP" id="MF_00252">
    <property type="entry name" value="Lys_tRNA_synth_class2"/>
    <property type="match status" value="1"/>
</dbReference>
<dbReference type="InterPro" id="IPR004364">
    <property type="entry name" value="Aa-tRNA-synt_II"/>
</dbReference>
<dbReference type="InterPro" id="IPR006195">
    <property type="entry name" value="aa-tRNA-synth_II"/>
</dbReference>
<dbReference type="InterPro" id="IPR045864">
    <property type="entry name" value="aa-tRNA-synth_II/BPL/LPL"/>
</dbReference>
<dbReference type="InterPro" id="IPR002313">
    <property type="entry name" value="Lys-tRNA-ligase_II"/>
</dbReference>
<dbReference type="InterPro" id="IPR044136">
    <property type="entry name" value="Lys-tRNA-ligase_II_N"/>
</dbReference>
<dbReference type="InterPro" id="IPR018149">
    <property type="entry name" value="Lys-tRNA-synth_II_C"/>
</dbReference>
<dbReference type="InterPro" id="IPR012340">
    <property type="entry name" value="NA-bd_OB-fold"/>
</dbReference>
<dbReference type="InterPro" id="IPR004365">
    <property type="entry name" value="NA-bd_OB_tRNA"/>
</dbReference>
<dbReference type="NCBIfam" id="TIGR00499">
    <property type="entry name" value="lysS_bact"/>
    <property type="match status" value="1"/>
</dbReference>
<dbReference type="NCBIfam" id="NF001756">
    <property type="entry name" value="PRK00484.1"/>
    <property type="match status" value="1"/>
</dbReference>
<dbReference type="PANTHER" id="PTHR42918:SF15">
    <property type="entry name" value="LYSINE--TRNA LIGASE, CHLOROPLASTIC_MITOCHONDRIAL"/>
    <property type="match status" value="1"/>
</dbReference>
<dbReference type="PANTHER" id="PTHR42918">
    <property type="entry name" value="LYSYL-TRNA SYNTHETASE"/>
    <property type="match status" value="1"/>
</dbReference>
<dbReference type="Pfam" id="PF00152">
    <property type="entry name" value="tRNA-synt_2"/>
    <property type="match status" value="1"/>
</dbReference>
<dbReference type="Pfam" id="PF01336">
    <property type="entry name" value="tRNA_anti-codon"/>
    <property type="match status" value="1"/>
</dbReference>
<dbReference type="PRINTS" id="PR00982">
    <property type="entry name" value="TRNASYNTHLYS"/>
</dbReference>
<dbReference type="SUPFAM" id="SSF55681">
    <property type="entry name" value="Class II aaRS and biotin synthetases"/>
    <property type="match status" value="1"/>
</dbReference>
<dbReference type="SUPFAM" id="SSF50249">
    <property type="entry name" value="Nucleic acid-binding proteins"/>
    <property type="match status" value="1"/>
</dbReference>
<dbReference type="PROSITE" id="PS50862">
    <property type="entry name" value="AA_TRNA_LIGASE_II"/>
    <property type="match status" value="1"/>
</dbReference>